<comment type="function">
    <text evidence="1">ATP-dependent specificity component of the Clp protease. It directs the protease to specific substrates. Can perform chaperone functions in the absence of ClpP.</text>
</comment>
<comment type="subunit">
    <text evidence="1">Component of the ClpX-ClpP complex. Forms a hexameric ring that, in the presence of ATP, binds to fourteen ClpP subunits assembled into a disk-like structure with a central cavity, resembling the structure of eukaryotic proteasomes.</text>
</comment>
<comment type="similarity">
    <text evidence="1">Belongs to the ClpX chaperone family.</text>
</comment>
<organism>
    <name type="scientific">Chlamydia trachomatis serovar A (strain ATCC VR-571B / DSM 19440 / HAR-13)</name>
    <dbReference type="NCBI Taxonomy" id="315277"/>
    <lineage>
        <taxon>Bacteria</taxon>
        <taxon>Pseudomonadati</taxon>
        <taxon>Chlamydiota</taxon>
        <taxon>Chlamydiia</taxon>
        <taxon>Chlamydiales</taxon>
        <taxon>Chlamydiaceae</taxon>
        <taxon>Chlamydia/Chlamydophila group</taxon>
        <taxon>Chlamydia</taxon>
    </lineage>
</organism>
<reference key="1">
    <citation type="journal article" date="2005" name="Infect. Immun.">
        <title>Comparative genomic analysis of Chlamydia trachomatis oculotropic and genitotropic strains.</title>
        <authorList>
            <person name="Carlson J.H."/>
            <person name="Porcella S.F."/>
            <person name="McClarty G."/>
            <person name="Caldwell H.D."/>
        </authorList>
    </citation>
    <scope>NUCLEOTIDE SEQUENCE [LARGE SCALE GENOMIC DNA]</scope>
    <source>
        <strain>ATCC VR-571B / DSM 19440 / HAR-13</strain>
    </source>
</reference>
<dbReference type="EMBL" id="CP000051">
    <property type="protein sequence ID" value="AAX50983.1"/>
    <property type="molecule type" value="Genomic_DNA"/>
</dbReference>
<dbReference type="RefSeq" id="WP_011324842.1">
    <property type="nucleotide sequence ID" value="NC_007429.1"/>
</dbReference>
<dbReference type="SMR" id="Q3KKY9"/>
<dbReference type="KEGG" id="cta:CTA_0766"/>
<dbReference type="HOGENOM" id="CLU_014218_8_2_0"/>
<dbReference type="Proteomes" id="UP000002532">
    <property type="component" value="Chromosome"/>
</dbReference>
<dbReference type="GO" id="GO:0009376">
    <property type="term" value="C:HslUV protease complex"/>
    <property type="evidence" value="ECO:0007669"/>
    <property type="project" value="TreeGrafter"/>
</dbReference>
<dbReference type="GO" id="GO:0005524">
    <property type="term" value="F:ATP binding"/>
    <property type="evidence" value="ECO:0007669"/>
    <property type="project" value="UniProtKB-UniRule"/>
</dbReference>
<dbReference type="GO" id="GO:0016887">
    <property type="term" value="F:ATP hydrolysis activity"/>
    <property type="evidence" value="ECO:0007669"/>
    <property type="project" value="InterPro"/>
</dbReference>
<dbReference type="GO" id="GO:0140662">
    <property type="term" value="F:ATP-dependent protein folding chaperone"/>
    <property type="evidence" value="ECO:0007669"/>
    <property type="project" value="InterPro"/>
</dbReference>
<dbReference type="GO" id="GO:0046983">
    <property type="term" value="F:protein dimerization activity"/>
    <property type="evidence" value="ECO:0007669"/>
    <property type="project" value="InterPro"/>
</dbReference>
<dbReference type="GO" id="GO:0051082">
    <property type="term" value="F:unfolded protein binding"/>
    <property type="evidence" value="ECO:0007669"/>
    <property type="project" value="UniProtKB-UniRule"/>
</dbReference>
<dbReference type="GO" id="GO:0008270">
    <property type="term" value="F:zinc ion binding"/>
    <property type="evidence" value="ECO:0007669"/>
    <property type="project" value="InterPro"/>
</dbReference>
<dbReference type="GO" id="GO:0051301">
    <property type="term" value="P:cell division"/>
    <property type="evidence" value="ECO:0007669"/>
    <property type="project" value="TreeGrafter"/>
</dbReference>
<dbReference type="GO" id="GO:0051603">
    <property type="term" value="P:proteolysis involved in protein catabolic process"/>
    <property type="evidence" value="ECO:0007669"/>
    <property type="project" value="TreeGrafter"/>
</dbReference>
<dbReference type="CDD" id="cd19497">
    <property type="entry name" value="RecA-like_ClpX"/>
    <property type="match status" value="1"/>
</dbReference>
<dbReference type="FunFam" id="1.10.8.60:FF:000002">
    <property type="entry name" value="ATP-dependent Clp protease ATP-binding subunit ClpX"/>
    <property type="match status" value="1"/>
</dbReference>
<dbReference type="FunFam" id="3.40.50.300:FF:000005">
    <property type="entry name" value="ATP-dependent Clp protease ATP-binding subunit ClpX"/>
    <property type="match status" value="1"/>
</dbReference>
<dbReference type="Gene3D" id="1.10.8.60">
    <property type="match status" value="1"/>
</dbReference>
<dbReference type="Gene3D" id="6.20.220.10">
    <property type="entry name" value="ClpX chaperone, C4-type zinc finger domain"/>
    <property type="match status" value="1"/>
</dbReference>
<dbReference type="Gene3D" id="3.40.50.300">
    <property type="entry name" value="P-loop containing nucleotide triphosphate hydrolases"/>
    <property type="match status" value="1"/>
</dbReference>
<dbReference type="HAMAP" id="MF_00175">
    <property type="entry name" value="ClpX"/>
    <property type="match status" value="1"/>
</dbReference>
<dbReference type="InterPro" id="IPR003593">
    <property type="entry name" value="AAA+_ATPase"/>
</dbReference>
<dbReference type="InterPro" id="IPR050052">
    <property type="entry name" value="ATP-dep_Clp_protease_ClpX"/>
</dbReference>
<dbReference type="InterPro" id="IPR003959">
    <property type="entry name" value="ATPase_AAA_core"/>
</dbReference>
<dbReference type="InterPro" id="IPR019489">
    <property type="entry name" value="Clp_ATPase_C"/>
</dbReference>
<dbReference type="InterPro" id="IPR004487">
    <property type="entry name" value="Clp_protease_ATP-bd_su_ClpX"/>
</dbReference>
<dbReference type="InterPro" id="IPR046425">
    <property type="entry name" value="ClpX_bact"/>
</dbReference>
<dbReference type="InterPro" id="IPR027417">
    <property type="entry name" value="P-loop_NTPase"/>
</dbReference>
<dbReference type="InterPro" id="IPR010603">
    <property type="entry name" value="Znf_CppX_C4"/>
</dbReference>
<dbReference type="InterPro" id="IPR038366">
    <property type="entry name" value="Znf_CppX_C4_sf"/>
</dbReference>
<dbReference type="NCBIfam" id="TIGR00382">
    <property type="entry name" value="clpX"/>
    <property type="match status" value="1"/>
</dbReference>
<dbReference type="NCBIfam" id="NF003745">
    <property type="entry name" value="PRK05342.1"/>
    <property type="match status" value="1"/>
</dbReference>
<dbReference type="PANTHER" id="PTHR48102:SF7">
    <property type="entry name" value="ATP-DEPENDENT CLP PROTEASE ATP-BINDING SUBUNIT CLPX-LIKE, MITOCHONDRIAL"/>
    <property type="match status" value="1"/>
</dbReference>
<dbReference type="PANTHER" id="PTHR48102">
    <property type="entry name" value="ATP-DEPENDENT CLP PROTEASE ATP-BINDING SUBUNIT CLPX-LIKE, MITOCHONDRIAL-RELATED"/>
    <property type="match status" value="1"/>
</dbReference>
<dbReference type="Pfam" id="PF07724">
    <property type="entry name" value="AAA_2"/>
    <property type="match status" value="1"/>
</dbReference>
<dbReference type="Pfam" id="PF10431">
    <property type="entry name" value="ClpB_D2-small"/>
    <property type="match status" value="1"/>
</dbReference>
<dbReference type="Pfam" id="PF06689">
    <property type="entry name" value="zf-C4_ClpX"/>
    <property type="match status" value="1"/>
</dbReference>
<dbReference type="SMART" id="SM00382">
    <property type="entry name" value="AAA"/>
    <property type="match status" value="1"/>
</dbReference>
<dbReference type="SMART" id="SM01086">
    <property type="entry name" value="ClpB_D2-small"/>
    <property type="match status" value="1"/>
</dbReference>
<dbReference type="SMART" id="SM00994">
    <property type="entry name" value="zf-C4_ClpX"/>
    <property type="match status" value="1"/>
</dbReference>
<dbReference type="SUPFAM" id="SSF57716">
    <property type="entry name" value="Glucocorticoid receptor-like (DNA-binding domain)"/>
    <property type="match status" value="1"/>
</dbReference>
<dbReference type="SUPFAM" id="SSF52540">
    <property type="entry name" value="P-loop containing nucleoside triphosphate hydrolases"/>
    <property type="match status" value="1"/>
</dbReference>
<dbReference type="PROSITE" id="PS51902">
    <property type="entry name" value="CLPX_ZB"/>
    <property type="match status" value="1"/>
</dbReference>
<feature type="chain" id="PRO_1000024541" description="ATP-dependent Clp protease ATP-binding subunit ClpX">
    <location>
        <begin position="1"/>
        <end position="419"/>
    </location>
</feature>
<feature type="domain" description="ClpX-type ZB" evidence="2">
    <location>
        <begin position="1"/>
        <end position="50"/>
    </location>
</feature>
<feature type="binding site" evidence="2">
    <location>
        <position position="9"/>
    </location>
    <ligand>
        <name>Zn(2+)</name>
        <dbReference type="ChEBI" id="CHEBI:29105"/>
    </ligand>
</feature>
<feature type="binding site" evidence="2">
    <location>
        <position position="12"/>
    </location>
    <ligand>
        <name>Zn(2+)</name>
        <dbReference type="ChEBI" id="CHEBI:29105"/>
    </ligand>
</feature>
<feature type="binding site" evidence="2">
    <location>
        <position position="31"/>
    </location>
    <ligand>
        <name>Zn(2+)</name>
        <dbReference type="ChEBI" id="CHEBI:29105"/>
    </ligand>
</feature>
<feature type="binding site" evidence="2">
    <location>
        <position position="34"/>
    </location>
    <ligand>
        <name>Zn(2+)</name>
        <dbReference type="ChEBI" id="CHEBI:29105"/>
    </ligand>
</feature>
<feature type="binding site" evidence="1">
    <location>
        <begin position="122"/>
        <end position="129"/>
    </location>
    <ligand>
        <name>ATP</name>
        <dbReference type="ChEBI" id="CHEBI:30616"/>
    </ligand>
</feature>
<proteinExistence type="inferred from homology"/>
<protein>
    <recommendedName>
        <fullName evidence="1">ATP-dependent Clp protease ATP-binding subunit ClpX</fullName>
    </recommendedName>
</protein>
<accession>Q3KKY9</accession>
<gene>
    <name evidence="1" type="primary">clpX</name>
    <name type="ordered locus">CTA_0766</name>
</gene>
<evidence type="ECO:0000255" key="1">
    <source>
        <dbReference type="HAMAP-Rule" id="MF_00175"/>
    </source>
</evidence>
<evidence type="ECO:0000255" key="2">
    <source>
        <dbReference type="PROSITE-ProRule" id="PRU01250"/>
    </source>
</evidence>
<sequence>MTKKNLAVCSFCGRSEKDVEKLIAGPSVYICDYCIKLCSGILDKTPAPATQEIATSSTSSPTSLRVLTPKEIKRHIDSYVIGQERAKKTISVAVYNHYKRIRALMQDKQVGYGKSNVLLLGPTGSGKTLIAKTLAKILDVPFTIADATTLTEAGYVGEDVENIVLRLLQAADYDVARAERGIIYIDEIDKIGRTTANVSITRDVSGEGVQQALLKIIEGTVANIPPKGGRKHPNQEYIRVNTENILFIVGGAFVNLDKIIAKRLGRTTIGFSEETDLAVTNRDHLLAKVETEDLIAFGMIPEFIGRFNCIVNCEELTLDELVEILTEPANAIVKQYTELFEEENVKLIFEKEALYAIAQKAKQAKTGARALGMILENLLRDLMFEIPSDPTVEAIRIEEDTITQNKPPVIIQKSPEAIA</sequence>
<keyword id="KW-0067">ATP-binding</keyword>
<keyword id="KW-0143">Chaperone</keyword>
<keyword id="KW-0479">Metal-binding</keyword>
<keyword id="KW-0547">Nucleotide-binding</keyword>
<keyword id="KW-0862">Zinc</keyword>
<name>CLPX_CHLTA</name>